<evidence type="ECO:0000305" key="1"/>
<gene>
    <name type="ordered locus">MT1509</name>
</gene>
<comment type="similarity">
    <text evidence="1">Belongs to the iron-sulfur cluster assembly SufBD family.</text>
</comment>
<organism>
    <name type="scientific">Mycobacterium tuberculosis (strain CDC 1551 / Oshkosh)</name>
    <dbReference type="NCBI Taxonomy" id="83331"/>
    <lineage>
        <taxon>Bacteria</taxon>
        <taxon>Bacillati</taxon>
        <taxon>Actinomycetota</taxon>
        <taxon>Actinomycetes</taxon>
        <taxon>Mycobacteriales</taxon>
        <taxon>Mycobacteriaceae</taxon>
        <taxon>Mycobacterium</taxon>
        <taxon>Mycobacterium tuberculosis complex</taxon>
    </lineage>
</organism>
<keyword id="KW-1185">Reference proteome</keyword>
<reference key="1">
    <citation type="journal article" date="2002" name="J. Bacteriol.">
        <title>Whole-genome comparison of Mycobacterium tuberculosis clinical and laboratory strains.</title>
        <authorList>
            <person name="Fleischmann R.D."/>
            <person name="Alland D."/>
            <person name="Eisen J.A."/>
            <person name="Carpenter L."/>
            <person name="White O."/>
            <person name="Peterson J.D."/>
            <person name="DeBoy R.T."/>
            <person name="Dodson R.J."/>
            <person name="Gwinn M.L."/>
            <person name="Haft D.H."/>
            <person name="Hickey E.K."/>
            <person name="Kolonay J.F."/>
            <person name="Nelson W.C."/>
            <person name="Umayam L.A."/>
            <person name="Ermolaeva M.D."/>
            <person name="Salzberg S.L."/>
            <person name="Delcher A."/>
            <person name="Utterback T.R."/>
            <person name="Weidman J.F."/>
            <person name="Khouri H.M."/>
            <person name="Gill J."/>
            <person name="Mikula A."/>
            <person name="Bishai W."/>
            <person name="Jacobs W.R. Jr."/>
            <person name="Venter J.C."/>
            <person name="Fraser C.M."/>
        </authorList>
    </citation>
    <scope>NUCLEOTIDE SEQUENCE [LARGE SCALE GENOMIC DNA]</scope>
    <source>
        <strain>CDC 1551 / Oshkosh</strain>
    </source>
</reference>
<accession>P9WFP4</accession>
<accession>L0T6Q6</accession>
<accession>O53153</accession>
<name>Y1462_MYCTO</name>
<sequence>MTAPGLTAAVEGIAHNKGELFASFDVDAFEVPHGRDEIWRFTPLRRLRGLHDGSARATGSATITVSERPGVYTQTVRRGDPRLGEGGVPTDRVAAQAFSSFNSATLVTVERDTQVVEPVGITVTGPGEGAVAYGHLQVRIEELGEAVVVIDHRGGGTYADNVEFVVDDAARLTAVWIADWADDTVHLSAHHARIGKDAVLRHVTVMLGGDVVRMSAGVRFCGAGGDAELLGLYFADDGQHLESRLLVDHAHPDCKSNVLYKGALQGDPASSLPDAHTVWVGDVLIRAQATGTDTFEVNRNLVLTDGARADSVPNLEIETGEIVGAGHASATGRFDDEQLFYLRSRGIPEAQARRLVVRGFFGEIIAKIAVPEVRERLTAAIEHELEITESTEKTTVS</sequence>
<protein>
    <recommendedName>
        <fullName>Iron-sulfur cluster assembly SufBD family protein MT1509</fullName>
    </recommendedName>
</protein>
<proteinExistence type="inferred from homology"/>
<feature type="chain" id="PRO_0000428503" description="Iron-sulfur cluster assembly SufBD family protein MT1509">
    <location>
        <begin position="1"/>
        <end position="397"/>
    </location>
</feature>
<dbReference type="EMBL" id="AE000516">
    <property type="protein sequence ID" value="AAK45773.1"/>
    <property type="molecule type" value="Genomic_DNA"/>
</dbReference>
<dbReference type="PIR" id="A70872">
    <property type="entry name" value="A70872"/>
</dbReference>
<dbReference type="SMR" id="P9WFP4"/>
<dbReference type="KEGG" id="mtc:MT1509"/>
<dbReference type="PATRIC" id="fig|83331.31.peg.1623"/>
<dbReference type="HOGENOM" id="CLU_026231_6_0_11"/>
<dbReference type="Proteomes" id="UP000001020">
    <property type="component" value="Chromosome"/>
</dbReference>
<dbReference type="GO" id="GO:0016226">
    <property type="term" value="P:iron-sulfur cluster assembly"/>
    <property type="evidence" value="ECO:0007669"/>
    <property type="project" value="InterPro"/>
</dbReference>
<dbReference type="InterPro" id="IPR055346">
    <property type="entry name" value="Fe-S_cluster_assembly_SufBD"/>
</dbReference>
<dbReference type="InterPro" id="IPR000825">
    <property type="entry name" value="SUF_FeS_clus_asmbl_SufBD_core"/>
</dbReference>
<dbReference type="InterPro" id="IPR037284">
    <property type="entry name" value="SUF_FeS_clus_asmbl_SufBD_sf"/>
</dbReference>
<dbReference type="InterPro" id="IPR011542">
    <property type="entry name" value="SUF_FeS_clus_asmbl_SufD"/>
</dbReference>
<dbReference type="NCBIfam" id="TIGR01981">
    <property type="entry name" value="sufD"/>
    <property type="match status" value="1"/>
</dbReference>
<dbReference type="PANTHER" id="PTHR43575">
    <property type="entry name" value="PROTEIN ABCI7, CHLOROPLASTIC"/>
    <property type="match status" value="1"/>
</dbReference>
<dbReference type="PANTHER" id="PTHR43575:SF1">
    <property type="entry name" value="PROTEIN ABCI7, CHLOROPLASTIC"/>
    <property type="match status" value="1"/>
</dbReference>
<dbReference type="Pfam" id="PF01458">
    <property type="entry name" value="SUFBD_core"/>
    <property type="match status" value="1"/>
</dbReference>
<dbReference type="SUPFAM" id="SSF101960">
    <property type="entry name" value="Stabilizer of iron transporter SufD"/>
    <property type="match status" value="1"/>
</dbReference>